<dbReference type="EC" id="2.3.1.9" evidence="3"/>
<dbReference type="EMBL" id="AB083303">
    <property type="protein sequence ID" value="BAC20582.1"/>
    <property type="molecule type" value="mRNA"/>
</dbReference>
<dbReference type="RefSeq" id="NP_001270524.1">
    <property type="nucleotide sequence ID" value="NM_001283595.1"/>
</dbReference>
<dbReference type="SMR" id="Q8HXY6"/>
<dbReference type="STRING" id="9541.ENSMFAP00000027085"/>
<dbReference type="eggNOG" id="KOG1390">
    <property type="taxonomic scope" value="Eukaryota"/>
</dbReference>
<dbReference type="UniPathway" id="UPA00659"/>
<dbReference type="Proteomes" id="UP000233100">
    <property type="component" value="Unplaced"/>
</dbReference>
<dbReference type="GO" id="GO:0005739">
    <property type="term" value="C:mitochondrion"/>
    <property type="evidence" value="ECO:0007669"/>
    <property type="project" value="UniProtKB-SubCell"/>
</dbReference>
<dbReference type="GO" id="GO:0003985">
    <property type="term" value="F:acetyl-CoA C-acetyltransferase activity"/>
    <property type="evidence" value="ECO:0007669"/>
    <property type="project" value="UniProtKB-EC"/>
</dbReference>
<dbReference type="GO" id="GO:0046872">
    <property type="term" value="F:metal ion binding"/>
    <property type="evidence" value="ECO:0007669"/>
    <property type="project" value="UniProtKB-KW"/>
</dbReference>
<dbReference type="GO" id="GO:0006635">
    <property type="term" value="P:fatty acid beta-oxidation"/>
    <property type="evidence" value="ECO:0007669"/>
    <property type="project" value="UniProtKB-UniPathway"/>
</dbReference>
<dbReference type="CDD" id="cd00751">
    <property type="entry name" value="thiolase"/>
    <property type="match status" value="1"/>
</dbReference>
<dbReference type="FunFam" id="3.40.47.10:FF:000007">
    <property type="entry name" value="acetyl-CoA acetyltransferase, mitochondrial"/>
    <property type="match status" value="1"/>
</dbReference>
<dbReference type="Gene3D" id="3.40.47.10">
    <property type="match status" value="1"/>
</dbReference>
<dbReference type="InterPro" id="IPR002155">
    <property type="entry name" value="Thiolase"/>
</dbReference>
<dbReference type="InterPro" id="IPR016039">
    <property type="entry name" value="Thiolase-like"/>
</dbReference>
<dbReference type="InterPro" id="IPR020615">
    <property type="entry name" value="Thiolase_acyl_enz_int_AS"/>
</dbReference>
<dbReference type="InterPro" id="IPR020610">
    <property type="entry name" value="Thiolase_AS"/>
</dbReference>
<dbReference type="InterPro" id="IPR020617">
    <property type="entry name" value="Thiolase_C"/>
</dbReference>
<dbReference type="InterPro" id="IPR020613">
    <property type="entry name" value="Thiolase_CS"/>
</dbReference>
<dbReference type="InterPro" id="IPR020616">
    <property type="entry name" value="Thiolase_N"/>
</dbReference>
<dbReference type="NCBIfam" id="TIGR01930">
    <property type="entry name" value="AcCoA-C-Actrans"/>
    <property type="match status" value="1"/>
</dbReference>
<dbReference type="PANTHER" id="PTHR18919:SF156">
    <property type="entry name" value="ACETYL-COA ACETYLTRANSFERASE, MITOCHONDRIAL"/>
    <property type="match status" value="1"/>
</dbReference>
<dbReference type="PANTHER" id="PTHR18919">
    <property type="entry name" value="ACETYL-COA C-ACYLTRANSFERASE"/>
    <property type="match status" value="1"/>
</dbReference>
<dbReference type="Pfam" id="PF02803">
    <property type="entry name" value="Thiolase_C"/>
    <property type="match status" value="1"/>
</dbReference>
<dbReference type="Pfam" id="PF00108">
    <property type="entry name" value="Thiolase_N"/>
    <property type="match status" value="1"/>
</dbReference>
<dbReference type="PIRSF" id="PIRSF000429">
    <property type="entry name" value="Ac-CoA_Ac_transf"/>
    <property type="match status" value="1"/>
</dbReference>
<dbReference type="SUPFAM" id="SSF53901">
    <property type="entry name" value="Thiolase-like"/>
    <property type="match status" value="2"/>
</dbReference>
<dbReference type="PROSITE" id="PS00098">
    <property type="entry name" value="THIOLASE_1"/>
    <property type="match status" value="1"/>
</dbReference>
<dbReference type="PROSITE" id="PS00737">
    <property type="entry name" value="THIOLASE_2"/>
    <property type="match status" value="1"/>
</dbReference>
<dbReference type="PROSITE" id="PS00099">
    <property type="entry name" value="THIOLASE_3"/>
    <property type="match status" value="1"/>
</dbReference>
<comment type="function">
    <text evidence="3">This is one of the enzymes that catalyzes the last step of the mitochondrial beta-oxidation pathway, an aerobic process breaking down fatty acids into acetyl-CoA. Using free coenzyme A/CoA, catalyzes the thiolytic cleavage of medium- to long-chain 3-oxoacyl-CoAs into acetyl-CoA and a fatty acyl-CoA shortened by two carbon atoms. The activity of the enzyme is reversible and it can also catalyze the condensation of two acetyl-CoA molecules into acetoacetyl-CoA. Thereby, it plays a major role in ketone body metabolism.</text>
</comment>
<comment type="catalytic activity">
    <reaction evidence="5">
        <text>2 acetyl-CoA = acetoacetyl-CoA + CoA</text>
        <dbReference type="Rhea" id="RHEA:21036"/>
        <dbReference type="ChEBI" id="CHEBI:57286"/>
        <dbReference type="ChEBI" id="CHEBI:57287"/>
        <dbReference type="ChEBI" id="CHEBI:57288"/>
        <dbReference type="EC" id="2.3.1.9"/>
    </reaction>
    <physiologicalReaction direction="left-to-right" evidence="3">
        <dbReference type="Rhea" id="RHEA:21037"/>
    </physiologicalReaction>
    <physiologicalReaction direction="right-to-left" evidence="3">
        <dbReference type="Rhea" id="RHEA:21038"/>
    </physiologicalReaction>
</comment>
<comment type="catalytic activity">
    <reaction evidence="3">
        <text>propanoyl-CoA + acetyl-CoA = 2-methyl-3-oxobutanoyl-CoA + CoA</text>
        <dbReference type="Rhea" id="RHEA:30719"/>
        <dbReference type="ChEBI" id="CHEBI:57287"/>
        <dbReference type="ChEBI" id="CHEBI:57288"/>
        <dbReference type="ChEBI" id="CHEBI:57335"/>
        <dbReference type="ChEBI" id="CHEBI:57392"/>
    </reaction>
    <physiologicalReaction direction="left-to-right" evidence="3">
        <dbReference type="Rhea" id="RHEA:30720"/>
    </physiologicalReaction>
    <physiologicalReaction direction="right-to-left" evidence="3">
        <dbReference type="Rhea" id="RHEA:30721"/>
    </physiologicalReaction>
</comment>
<comment type="activity regulation">
    <text evidence="3">Activated by potassium ions, but not sodium ions.</text>
</comment>
<comment type="pathway">
    <text evidence="3">Lipid metabolism; fatty acid beta-oxidation.</text>
</comment>
<comment type="subunit">
    <text evidence="3">Homotetramer.</text>
</comment>
<comment type="subcellular location">
    <subcellularLocation>
        <location evidence="3">Mitochondrion</location>
    </subcellularLocation>
</comment>
<comment type="PTM">
    <text evidence="1">Succinylation at Lys-268, adjacent to a coenzyme A binding site. Desuccinylated by SIRT5 (By similarity).</text>
</comment>
<comment type="similarity">
    <text evidence="6">Belongs to the thiolase-like superfamily. Thiolase family.</text>
</comment>
<reference key="1">
    <citation type="submission" date="2002-04" db="EMBL/GenBank/DDBJ databases">
        <title>Isolation and characterization of cDNA for macaque neurological disease genes.</title>
        <authorList>
            <person name="Kusuda J."/>
            <person name="Osada N."/>
            <person name="Hida M."/>
            <person name="Sugano S."/>
            <person name="Hashimoto K."/>
        </authorList>
    </citation>
    <scope>NUCLEOTIDE SEQUENCE [LARGE SCALE MRNA]</scope>
    <source>
        <tissue>Temporal cortex</tissue>
    </source>
</reference>
<sequence>MAVLAALLRGGARSRSPLLRRLVQEIRYVERSYVSKPTLKEVVIVSATRTPIGSFLGSLSLLPTTKLGSIAMQGAIEKAGIPKEEVKEAYMGNVLQGGEGQAPARQAVLGAGLPISTPRTTINKVCASGMKAIMMASQSLMCGHQDVMVAGGMESMSNVPYVMNRGSTPYGGVKLEDLIVKDGLTDVYNKIHMGSCAENTAKKLNIARDEQDAYAINSYTRSKAAWEAGKFGNEVIPVTVTVKGQPDVVVKEDEEYKRVDFSKVPKLKTVFQKENGTITAANASTLNDGAAALVLMTAGAAKRLNVTPLARIVAFADAAVEPIDFPIAPVHAVSMVLKDVGLKKEDIAMWEVNEAFSLVVLANIKMLEIDPQKVNINGGAVSLGHPIGMSGARIVGHLTHALKQGEYGLASICNGGGGASAMLIQKL</sequence>
<accession>Q8HXY6</accession>
<proteinExistence type="evidence at transcript level"/>
<organism>
    <name type="scientific">Macaca fascicularis</name>
    <name type="common">Crab-eating macaque</name>
    <name type="synonym">Cynomolgus monkey</name>
    <dbReference type="NCBI Taxonomy" id="9541"/>
    <lineage>
        <taxon>Eukaryota</taxon>
        <taxon>Metazoa</taxon>
        <taxon>Chordata</taxon>
        <taxon>Craniata</taxon>
        <taxon>Vertebrata</taxon>
        <taxon>Euteleostomi</taxon>
        <taxon>Mammalia</taxon>
        <taxon>Eutheria</taxon>
        <taxon>Euarchontoglires</taxon>
        <taxon>Primates</taxon>
        <taxon>Haplorrhini</taxon>
        <taxon>Catarrhini</taxon>
        <taxon>Cercopithecidae</taxon>
        <taxon>Cercopithecinae</taxon>
        <taxon>Macaca</taxon>
    </lineage>
</organism>
<evidence type="ECO:0000250" key="1"/>
<evidence type="ECO:0000250" key="2">
    <source>
        <dbReference type="UniProtKB" id="P17764"/>
    </source>
</evidence>
<evidence type="ECO:0000250" key="3">
    <source>
        <dbReference type="UniProtKB" id="P24752"/>
    </source>
</evidence>
<evidence type="ECO:0000250" key="4">
    <source>
        <dbReference type="UniProtKB" id="Q8QZT1"/>
    </source>
</evidence>
<evidence type="ECO:0000255" key="5">
    <source>
        <dbReference type="PROSITE-ProRule" id="PRU10020"/>
    </source>
</evidence>
<evidence type="ECO:0000305" key="6"/>
<protein>
    <recommendedName>
        <fullName>Acetyl-CoA acetyltransferase, mitochondrial</fullName>
        <ecNumber evidence="3">2.3.1.9</ecNumber>
    </recommendedName>
    <alternativeName>
        <fullName>Acetoacetyl-CoA thiolase</fullName>
    </alternativeName>
</protein>
<feature type="transit peptide" description="Mitochondrion" evidence="2">
    <location>
        <begin position="1"/>
        <end position="33"/>
    </location>
</feature>
<feature type="chain" id="PRO_0000034086" description="Acetyl-CoA acetyltransferase, mitochondrial">
    <location>
        <begin position="34"/>
        <end position="427"/>
    </location>
</feature>
<feature type="active site" description="Acyl-thioester intermediate" evidence="3">
    <location>
        <position position="126"/>
    </location>
</feature>
<feature type="active site" description="Proton donor/acceptor" evidence="3">
    <location>
        <position position="413"/>
    </location>
</feature>
<feature type="binding site" evidence="3">
    <location>
        <position position="219"/>
    </location>
    <ligand>
        <name>CoA</name>
        <dbReference type="ChEBI" id="CHEBI:57287"/>
    </ligand>
</feature>
<feature type="binding site" evidence="3">
    <location>
        <position position="219"/>
    </location>
    <ligand>
        <name>K(+)</name>
        <dbReference type="ChEBI" id="CHEBI:29103"/>
    </ligand>
</feature>
<feature type="binding site" evidence="3">
    <location>
        <begin position="258"/>
        <end position="260"/>
    </location>
    <ligand>
        <name>CoA</name>
        <dbReference type="ChEBI" id="CHEBI:57287"/>
    </ligand>
</feature>
<feature type="binding site" evidence="3">
    <location>
        <position position="263"/>
    </location>
    <ligand>
        <name>CoA</name>
        <dbReference type="ChEBI" id="CHEBI:57287"/>
    </ligand>
</feature>
<feature type="binding site" evidence="3">
    <location>
        <position position="280"/>
    </location>
    <ligand>
        <name>K(+)</name>
        <dbReference type="ChEBI" id="CHEBI:29103"/>
    </ligand>
</feature>
<feature type="binding site" evidence="3">
    <location>
        <position position="281"/>
    </location>
    <ligand>
        <name>K(+)</name>
        <dbReference type="ChEBI" id="CHEBI:29103"/>
    </ligand>
</feature>
<feature type="binding site" evidence="3">
    <location>
        <position position="283"/>
    </location>
    <ligand>
        <name>K(+)</name>
        <dbReference type="ChEBI" id="CHEBI:29103"/>
    </ligand>
</feature>
<feature type="binding site" evidence="3">
    <location>
        <position position="284"/>
    </location>
    <ligand>
        <name>CoA</name>
        <dbReference type="ChEBI" id="CHEBI:57287"/>
    </ligand>
</feature>
<feature type="binding site" evidence="3">
    <location>
        <position position="381"/>
    </location>
    <ligand>
        <name>K(+)</name>
        <dbReference type="ChEBI" id="CHEBI:29103"/>
    </ligand>
</feature>
<feature type="site" description="Increases nucleophilicity of active site Cys" evidence="3">
    <location>
        <position position="385"/>
    </location>
</feature>
<feature type="modified residue" description="N6-acetyllysine; alternate" evidence="4">
    <location>
        <position position="66"/>
    </location>
</feature>
<feature type="modified residue" description="N6-succinyllysine; alternate" evidence="4">
    <location>
        <position position="66"/>
    </location>
</feature>
<feature type="modified residue" description="N6-succinyllysine" evidence="4">
    <location>
        <position position="78"/>
    </location>
</feature>
<feature type="modified residue" description="N6-acetyllysine; alternate" evidence="3">
    <location>
        <position position="174"/>
    </location>
</feature>
<feature type="modified residue" description="N6-succinyllysine; alternate" evidence="4">
    <location>
        <position position="174"/>
    </location>
</feature>
<feature type="modified residue" description="N6-acetyllysine; alternate" evidence="3">
    <location>
        <position position="181"/>
    </location>
</feature>
<feature type="modified residue" description="N6-succinyllysine; alternate" evidence="4">
    <location>
        <position position="181"/>
    </location>
</feature>
<feature type="modified residue" description="N6-acetyllysine; alternate" evidence="4">
    <location>
        <position position="190"/>
    </location>
</feature>
<feature type="modified residue" description="N6-succinyllysine; alternate" evidence="4">
    <location>
        <position position="190"/>
    </location>
</feature>
<feature type="modified residue" description="N6-acetyllysine; alternate" evidence="4">
    <location>
        <position position="202"/>
    </location>
</feature>
<feature type="modified residue" description="N6-succinyllysine; alternate" evidence="4">
    <location>
        <position position="202"/>
    </location>
</feature>
<feature type="modified residue" description="N6-acetyllysine; alternate" evidence="4">
    <location>
        <position position="223"/>
    </location>
</feature>
<feature type="modified residue" description="N6-succinyllysine; alternate" evidence="4">
    <location>
        <position position="223"/>
    </location>
</feature>
<feature type="modified residue" description="N6-acetyllysine; alternate" evidence="4">
    <location>
        <position position="230"/>
    </location>
</feature>
<feature type="modified residue" description="N6-succinyllysine; alternate" evidence="4">
    <location>
        <position position="230"/>
    </location>
</feature>
<feature type="modified residue" description="N6-succinyllysine" evidence="4">
    <location>
        <position position="243"/>
    </location>
</feature>
<feature type="modified residue" description="N6-acetyllysine" evidence="3">
    <location>
        <position position="251"/>
    </location>
</feature>
<feature type="modified residue" description="N6-acetyllysine" evidence="4">
    <location>
        <position position="257"/>
    </location>
</feature>
<feature type="modified residue" description="N6-acetyllysine; alternate" evidence="3">
    <location>
        <position position="263"/>
    </location>
</feature>
<feature type="modified residue" description="N6-succinyllysine; alternate" evidence="4">
    <location>
        <position position="263"/>
    </location>
</feature>
<feature type="modified residue" description="N6-succinyllysine" evidence="4">
    <location>
        <position position="266"/>
    </location>
</feature>
<feature type="modified residue" description="N6-succinyllysine" evidence="4">
    <location>
        <position position="268"/>
    </location>
</feature>
<feature type="modified residue" description="N6-acetyllysine" evidence="4">
    <location>
        <position position="273"/>
    </location>
</feature>
<feature type="modified residue" description="N6-acetyllysine" evidence="4">
    <location>
        <position position="338"/>
    </location>
</feature>
<gene>
    <name type="primary">ACAT1</name>
    <name type="ORF">QtrA-14294</name>
</gene>
<name>THIL_MACFA</name>
<keyword id="KW-0007">Acetylation</keyword>
<keyword id="KW-0012">Acyltransferase</keyword>
<keyword id="KW-0276">Fatty acid metabolism</keyword>
<keyword id="KW-0443">Lipid metabolism</keyword>
<keyword id="KW-0479">Metal-binding</keyword>
<keyword id="KW-0496">Mitochondrion</keyword>
<keyword id="KW-0630">Potassium</keyword>
<keyword id="KW-1185">Reference proteome</keyword>
<keyword id="KW-0808">Transferase</keyword>
<keyword id="KW-0809">Transit peptide</keyword>